<name>CAPSD_SCSVJ</name>
<organism>
    <name type="scientific">Subterranean clover stunt virus (strain J)</name>
    <name type="common">SCSV</name>
    <dbReference type="NCBI Taxonomy" id="291608"/>
    <lineage>
        <taxon>Viruses</taxon>
        <taxon>Monodnaviria</taxon>
        <taxon>Shotokuvirae</taxon>
        <taxon>Cressdnaviricota</taxon>
        <taxon>Arfiviricetes</taxon>
        <taxon>Mulpavirales</taxon>
        <taxon>Nanoviridae</taxon>
        <taxon>Nanovirus</taxon>
        <taxon>Subterranean clover stunt virus</taxon>
    </lineage>
</organism>
<feature type="chain" id="PRO_0000222438" description="Capsid protein">
    <location>
        <begin position="1"/>
        <end position="170"/>
    </location>
</feature>
<feature type="region of interest" description="Disordered" evidence="1">
    <location>
        <begin position="1"/>
        <end position="25"/>
    </location>
</feature>
<feature type="compositionally biased region" description="Basic residues" evidence="1">
    <location>
        <begin position="1"/>
        <end position="19"/>
    </location>
</feature>
<keyword id="KW-0167">Capsid protein</keyword>
<keyword id="KW-1140">T=1 icosahedral capsid protein</keyword>
<keyword id="KW-0946">Virion</keyword>
<reference key="1">
    <citation type="submission" date="1995-09" db="EMBL/GenBank/DDBJ databases">
        <title>Sequence variation of subterranean clover stunt virus component 5.</title>
        <authorList>
            <person name="Boevink P.C."/>
            <person name="Keese P.K."/>
        </authorList>
    </citation>
    <scope>NUCLEOTIDE SEQUENCE [GENOMIC DNA]</scope>
</reference>
<proteinExistence type="inferred from homology"/>
<evidence type="ECO:0000256" key="1">
    <source>
        <dbReference type="SAM" id="MobiDB-lite"/>
    </source>
</evidence>
<evidence type="ECO:0000305" key="2"/>
<dbReference type="EMBL" id="L47332">
    <property type="protein sequence ID" value="AAA75463.1"/>
    <property type="molecule type" value="Genomic_DNA"/>
</dbReference>
<dbReference type="SMR" id="Q87019"/>
<dbReference type="GO" id="GO:0039615">
    <property type="term" value="C:T=1 icosahedral viral capsid"/>
    <property type="evidence" value="ECO:0007669"/>
    <property type="project" value="UniProtKB-KW"/>
</dbReference>
<dbReference type="InterPro" id="IPR006753">
    <property type="entry name" value="Nanovirus_coat"/>
</dbReference>
<dbReference type="Pfam" id="PF04660">
    <property type="entry name" value="Nanovirus_coat"/>
    <property type="match status" value="1"/>
</dbReference>
<protein>
    <recommendedName>
        <fullName>Capsid protein</fullName>
        <shortName>CP</shortName>
    </recommendedName>
    <alternativeName>
        <fullName>Coat protein</fullName>
    </alternativeName>
</protein>
<comment type="subcellular location">
    <subcellularLocation>
        <location evidence="2">Virion</location>
    </subcellularLocation>
</comment>
<comment type="similarity">
    <text evidence="2">Belongs to the nanoviridae capsid protein family.</text>
</comment>
<accession>Q87019</accession>
<gene>
    <name type="primary">DNA-S</name>
    <name type="synonym">C5</name>
</gene>
<sequence length="170" mass="19014">MAQLRWGRKGVRSQRRKYSRPVAYKPPSSKVVSHVETVLNKKDVTGAEMKPFNDGSRYSMKKIMVSATLTMAPGELLNYLIVKSNSPIANWSSSFSNPSLMVKESVQDTVTILRRGKLESSGTAGKDVTKSFSRFVNLGLGISQTQHLYLIIYSSDAMKITLETRMYIDV</sequence>
<organismHost>
    <name type="scientific">Medicago lupulina</name>
    <dbReference type="NCBI Taxonomy" id="47085"/>
</organismHost>
<organismHost>
    <name type="scientific">Medicago minima</name>
    <dbReference type="NCBI Taxonomy" id="70957"/>
</organismHost>
<organismHost>
    <name type="scientific">Pisum sativum</name>
    <name type="common">Garden pea</name>
    <name type="synonym">Lathyrus oleraceus</name>
    <dbReference type="NCBI Taxonomy" id="3888"/>
</organismHost>
<organismHost>
    <name type="scientific">Trifolium glomeratum</name>
    <dbReference type="NCBI Taxonomy" id="74514"/>
</organismHost>
<organismHost>
    <name type="scientific">Trifolium pratense</name>
    <name type="common">Red clover</name>
    <dbReference type="NCBI Taxonomy" id="57577"/>
</organismHost>
<organismHost>
    <name type="scientific">Trifolium repens</name>
    <name type="common">Creeping white clover</name>
    <dbReference type="NCBI Taxonomy" id="3899"/>
</organismHost>
<organismHost>
    <name type="scientific">Trifolium subterraneum</name>
    <name type="common">Subterranean clover</name>
    <dbReference type="NCBI Taxonomy" id="3900"/>
</organismHost>
<organismHost>
    <name type="scientific">Vicia faba</name>
    <name type="common">Broad bean</name>
    <name type="synonym">Faba vulgaris</name>
    <dbReference type="NCBI Taxonomy" id="3906"/>
</organismHost>
<organismHost>
    <name type="scientific">Wisteria sinensis</name>
    <dbReference type="NCBI Taxonomy" id="20997"/>
</organismHost>